<name>HSLO_SYNC1</name>
<protein>
    <recommendedName>
        <fullName evidence="1">33 kDa chaperonin</fullName>
    </recommendedName>
    <alternativeName>
        <fullName evidence="1">Heat shock protein 33 homolog</fullName>
        <shortName evidence="1">HSP33</shortName>
    </alternativeName>
</protein>
<proteinExistence type="inferred from homology"/>
<reference key="1">
    <citation type="submission" date="2005-10" db="EMBL/GenBank/DDBJ databases">
        <title>Complete sequence of Pelobacter carbinolicus DSM 2380.</title>
        <authorList>
            <person name="Copeland A."/>
            <person name="Lucas S."/>
            <person name="Lapidus A."/>
            <person name="Barry K."/>
            <person name="Detter J.C."/>
            <person name="Glavina T."/>
            <person name="Hammon N."/>
            <person name="Israni S."/>
            <person name="Pitluck S."/>
            <person name="Chertkov O."/>
            <person name="Schmutz J."/>
            <person name="Larimer F."/>
            <person name="Land M."/>
            <person name="Kyrpides N."/>
            <person name="Ivanova N."/>
            <person name="Richardson P."/>
        </authorList>
    </citation>
    <scope>NUCLEOTIDE SEQUENCE [LARGE SCALE GENOMIC DNA]</scope>
    <source>
        <strain>DSM 2380 / NBRC 103641 / GraBd1</strain>
    </source>
</reference>
<sequence length="288" mass="30853">MKDHLVRVATQDGTLRATAAVTTELVDAICRRQGTDPTASVALGRLVTGTALMGSLLKGDQRLALMIEGNGPVKKLHAETDALGQVRGSVKEPISGIAPTETGFDVPAAIGRAGFLHVVKDLGLKEPYRGMVQLYSSEVAEDLAYYLTSSEQVPSTVALGVYLEKDGRISAAGGLLVQALPEGEEALIALLEERLVALPPITTLLRDGKGPRQIIEELFAGIPLGRNEETPLVFRCTCSRSQVLGMLKTLGEEELKDMAAKDEQTSVVCEFCKERYSFSSDEIKALIA</sequence>
<comment type="function">
    <text evidence="1">Redox regulated molecular chaperone. Protects both thermally unfolding and oxidatively damaged proteins from irreversible aggregation. Plays an important role in the bacterial defense system toward oxidative stress.</text>
</comment>
<comment type="subcellular location">
    <subcellularLocation>
        <location evidence="1">Cytoplasm</location>
    </subcellularLocation>
</comment>
<comment type="PTM">
    <text evidence="1">Under oxidizing conditions two disulfide bonds are formed involving the reactive cysteines. Under reducing conditions zinc is bound to the reactive cysteines and the protein is inactive.</text>
</comment>
<comment type="similarity">
    <text evidence="1">Belongs to the HSP33 family.</text>
</comment>
<keyword id="KW-0143">Chaperone</keyword>
<keyword id="KW-0963">Cytoplasm</keyword>
<keyword id="KW-1015">Disulfide bond</keyword>
<keyword id="KW-0676">Redox-active center</keyword>
<keyword id="KW-1185">Reference proteome</keyword>
<keyword id="KW-0862">Zinc</keyword>
<feature type="chain" id="PRO_0000238078" description="33 kDa chaperonin">
    <location>
        <begin position="1"/>
        <end position="288"/>
    </location>
</feature>
<feature type="disulfide bond" description="Redox-active" evidence="1">
    <location>
        <begin position="236"/>
        <end position="238"/>
    </location>
</feature>
<feature type="disulfide bond" description="Redox-active" evidence="1">
    <location>
        <begin position="269"/>
        <end position="272"/>
    </location>
</feature>
<organism>
    <name type="scientific">Syntrophotalea carbinolica (strain DSM 2380 / NBRC 103641 / GraBd1)</name>
    <name type="common">Pelobacter carbinolicus</name>
    <dbReference type="NCBI Taxonomy" id="338963"/>
    <lineage>
        <taxon>Bacteria</taxon>
        <taxon>Pseudomonadati</taxon>
        <taxon>Thermodesulfobacteriota</taxon>
        <taxon>Desulfuromonadia</taxon>
        <taxon>Desulfuromonadales</taxon>
        <taxon>Syntrophotaleaceae</taxon>
        <taxon>Syntrophotalea</taxon>
    </lineage>
</organism>
<evidence type="ECO:0000255" key="1">
    <source>
        <dbReference type="HAMAP-Rule" id="MF_00117"/>
    </source>
</evidence>
<accession>Q3A7V6</accession>
<gene>
    <name evidence="1" type="primary">hslO</name>
    <name type="ordered locus">Pcar_0277</name>
</gene>
<dbReference type="EMBL" id="CP000142">
    <property type="protein sequence ID" value="ABA87538.1"/>
    <property type="molecule type" value="Genomic_DNA"/>
</dbReference>
<dbReference type="RefSeq" id="WP_011339947.1">
    <property type="nucleotide sequence ID" value="NC_007498.2"/>
</dbReference>
<dbReference type="SMR" id="Q3A7V6"/>
<dbReference type="STRING" id="338963.Pcar_0277"/>
<dbReference type="KEGG" id="pca:Pcar_0277"/>
<dbReference type="eggNOG" id="COG1281">
    <property type="taxonomic scope" value="Bacteria"/>
</dbReference>
<dbReference type="HOGENOM" id="CLU_054493_1_0_7"/>
<dbReference type="OrthoDB" id="9793753at2"/>
<dbReference type="Proteomes" id="UP000002534">
    <property type="component" value="Chromosome"/>
</dbReference>
<dbReference type="GO" id="GO:0005737">
    <property type="term" value="C:cytoplasm"/>
    <property type="evidence" value="ECO:0007669"/>
    <property type="project" value="UniProtKB-SubCell"/>
</dbReference>
<dbReference type="GO" id="GO:0044183">
    <property type="term" value="F:protein folding chaperone"/>
    <property type="evidence" value="ECO:0007669"/>
    <property type="project" value="TreeGrafter"/>
</dbReference>
<dbReference type="GO" id="GO:0051082">
    <property type="term" value="F:unfolded protein binding"/>
    <property type="evidence" value="ECO:0007669"/>
    <property type="project" value="UniProtKB-UniRule"/>
</dbReference>
<dbReference type="GO" id="GO:0042026">
    <property type="term" value="P:protein refolding"/>
    <property type="evidence" value="ECO:0007669"/>
    <property type="project" value="TreeGrafter"/>
</dbReference>
<dbReference type="CDD" id="cd00498">
    <property type="entry name" value="Hsp33"/>
    <property type="match status" value="1"/>
</dbReference>
<dbReference type="Gene3D" id="3.55.30.10">
    <property type="entry name" value="Hsp33 domain"/>
    <property type="match status" value="1"/>
</dbReference>
<dbReference type="Gene3D" id="3.90.1280.10">
    <property type="entry name" value="HSP33 redox switch-like"/>
    <property type="match status" value="1"/>
</dbReference>
<dbReference type="HAMAP" id="MF_00117">
    <property type="entry name" value="HslO"/>
    <property type="match status" value="1"/>
</dbReference>
<dbReference type="InterPro" id="IPR000397">
    <property type="entry name" value="Heat_shock_Hsp33"/>
</dbReference>
<dbReference type="InterPro" id="IPR016154">
    <property type="entry name" value="Heat_shock_Hsp33_C"/>
</dbReference>
<dbReference type="InterPro" id="IPR016153">
    <property type="entry name" value="Heat_shock_Hsp33_N"/>
</dbReference>
<dbReference type="NCBIfam" id="NF001033">
    <property type="entry name" value="PRK00114.1"/>
    <property type="match status" value="1"/>
</dbReference>
<dbReference type="PANTHER" id="PTHR30111">
    <property type="entry name" value="33 KDA CHAPERONIN"/>
    <property type="match status" value="1"/>
</dbReference>
<dbReference type="PANTHER" id="PTHR30111:SF1">
    <property type="entry name" value="33 KDA CHAPERONIN"/>
    <property type="match status" value="1"/>
</dbReference>
<dbReference type="Pfam" id="PF01430">
    <property type="entry name" value="HSP33"/>
    <property type="match status" value="1"/>
</dbReference>
<dbReference type="PIRSF" id="PIRSF005261">
    <property type="entry name" value="Heat_shock_Hsp33"/>
    <property type="match status" value="1"/>
</dbReference>
<dbReference type="SUPFAM" id="SSF64397">
    <property type="entry name" value="Hsp33 domain"/>
    <property type="match status" value="1"/>
</dbReference>
<dbReference type="SUPFAM" id="SSF118352">
    <property type="entry name" value="HSP33 redox switch-like"/>
    <property type="match status" value="1"/>
</dbReference>